<evidence type="ECO:0000255" key="1">
    <source>
        <dbReference type="HAMAP-Rule" id="MF_00104"/>
    </source>
</evidence>
<evidence type="ECO:0000305" key="2"/>
<protein>
    <recommendedName>
        <fullName evidence="1">Ribonuclease 3</fullName>
        <ecNumber evidence="1">3.1.26.3</ecNumber>
    </recommendedName>
    <alternativeName>
        <fullName evidence="1">Ribonuclease III</fullName>
        <shortName evidence="1">RNase III</shortName>
    </alternativeName>
</protein>
<keyword id="KW-0963">Cytoplasm</keyword>
<keyword id="KW-0255">Endonuclease</keyword>
<keyword id="KW-0378">Hydrolase</keyword>
<keyword id="KW-0460">Magnesium</keyword>
<keyword id="KW-0479">Metal-binding</keyword>
<keyword id="KW-0507">mRNA processing</keyword>
<keyword id="KW-0540">Nuclease</keyword>
<keyword id="KW-0694">RNA-binding</keyword>
<keyword id="KW-0698">rRNA processing</keyword>
<keyword id="KW-0699">rRNA-binding</keyword>
<keyword id="KW-0819">tRNA processing</keyword>
<dbReference type="EC" id="3.1.26.3" evidence="1"/>
<dbReference type="EMBL" id="BA000037">
    <property type="protein sequence ID" value="BAC95595.1"/>
    <property type="status" value="ALT_INIT"/>
    <property type="molecule type" value="Genomic_DNA"/>
</dbReference>
<dbReference type="RefSeq" id="WP_013571113.1">
    <property type="nucleotide sequence ID" value="NC_005139.1"/>
</dbReference>
<dbReference type="SMR" id="Q7MHN8"/>
<dbReference type="STRING" id="672.VV93_v1c25400"/>
<dbReference type="KEGG" id="vvy:VV2831"/>
<dbReference type="eggNOG" id="COG0571">
    <property type="taxonomic scope" value="Bacteria"/>
</dbReference>
<dbReference type="HOGENOM" id="CLU_000907_1_1_6"/>
<dbReference type="Proteomes" id="UP000002675">
    <property type="component" value="Chromosome I"/>
</dbReference>
<dbReference type="GO" id="GO:0005737">
    <property type="term" value="C:cytoplasm"/>
    <property type="evidence" value="ECO:0007669"/>
    <property type="project" value="UniProtKB-SubCell"/>
</dbReference>
<dbReference type="GO" id="GO:0003725">
    <property type="term" value="F:double-stranded RNA binding"/>
    <property type="evidence" value="ECO:0007669"/>
    <property type="project" value="TreeGrafter"/>
</dbReference>
<dbReference type="GO" id="GO:0046872">
    <property type="term" value="F:metal ion binding"/>
    <property type="evidence" value="ECO:0007669"/>
    <property type="project" value="UniProtKB-KW"/>
</dbReference>
<dbReference type="GO" id="GO:0004525">
    <property type="term" value="F:ribonuclease III activity"/>
    <property type="evidence" value="ECO:0007669"/>
    <property type="project" value="UniProtKB-UniRule"/>
</dbReference>
<dbReference type="GO" id="GO:0019843">
    <property type="term" value="F:rRNA binding"/>
    <property type="evidence" value="ECO:0007669"/>
    <property type="project" value="UniProtKB-KW"/>
</dbReference>
<dbReference type="GO" id="GO:0006397">
    <property type="term" value="P:mRNA processing"/>
    <property type="evidence" value="ECO:0007669"/>
    <property type="project" value="UniProtKB-UniRule"/>
</dbReference>
<dbReference type="GO" id="GO:0010468">
    <property type="term" value="P:regulation of gene expression"/>
    <property type="evidence" value="ECO:0007669"/>
    <property type="project" value="TreeGrafter"/>
</dbReference>
<dbReference type="GO" id="GO:0006364">
    <property type="term" value="P:rRNA processing"/>
    <property type="evidence" value="ECO:0007669"/>
    <property type="project" value="UniProtKB-UniRule"/>
</dbReference>
<dbReference type="GO" id="GO:0008033">
    <property type="term" value="P:tRNA processing"/>
    <property type="evidence" value="ECO:0007669"/>
    <property type="project" value="UniProtKB-KW"/>
</dbReference>
<dbReference type="CDD" id="cd10845">
    <property type="entry name" value="DSRM_RNAse_III_family"/>
    <property type="match status" value="1"/>
</dbReference>
<dbReference type="CDD" id="cd00593">
    <property type="entry name" value="RIBOc"/>
    <property type="match status" value="1"/>
</dbReference>
<dbReference type="FunFam" id="1.10.1520.10:FF:000001">
    <property type="entry name" value="Ribonuclease 3"/>
    <property type="match status" value="1"/>
</dbReference>
<dbReference type="FunFam" id="3.30.160.20:FF:000003">
    <property type="entry name" value="Ribonuclease 3"/>
    <property type="match status" value="1"/>
</dbReference>
<dbReference type="Gene3D" id="3.30.160.20">
    <property type="match status" value="1"/>
</dbReference>
<dbReference type="Gene3D" id="1.10.1520.10">
    <property type="entry name" value="Ribonuclease III domain"/>
    <property type="match status" value="1"/>
</dbReference>
<dbReference type="HAMAP" id="MF_00104">
    <property type="entry name" value="RNase_III"/>
    <property type="match status" value="1"/>
</dbReference>
<dbReference type="InterPro" id="IPR014720">
    <property type="entry name" value="dsRBD_dom"/>
</dbReference>
<dbReference type="InterPro" id="IPR011907">
    <property type="entry name" value="RNase_III"/>
</dbReference>
<dbReference type="InterPro" id="IPR000999">
    <property type="entry name" value="RNase_III_dom"/>
</dbReference>
<dbReference type="InterPro" id="IPR036389">
    <property type="entry name" value="RNase_III_sf"/>
</dbReference>
<dbReference type="NCBIfam" id="TIGR02191">
    <property type="entry name" value="RNaseIII"/>
    <property type="match status" value="1"/>
</dbReference>
<dbReference type="PANTHER" id="PTHR11207:SF0">
    <property type="entry name" value="RIBONUCLEASE 3"/>
    <property type="match status" value="1"/>
</dbReference>
<dbReference type="PANTHER" id="PTHR11207">
    <property type="entry name" value="RIBONUCLEASE III"/>
    <property type="match status" value="1"/>
</dbReference>
<dbReference type="Pfam" id="PF00035">
    <property type="entry name" value="dsrm"/>
    <property type="match status" value="1"/>
</dbReference>
<dbReference type="Pfam" id="PF14622">
    <property type="entry name" value="Ribonucleas_3_3"/>
    <property type="match status" value="1"/>
</dbReference>
<dbReference type="SMART" id="SM00358">
    <property type="entry name" value="DSRM"/>
    <property type="match status" value="1"/>
</dbReference>
<dbReference type="SMART" id="SM00535">
    <property type="entry name" value="RIBOc"/>
    <property type="match status" value="1"/>
</dbReference>
<dbReference type="SUPFAM" id="SSF54768">
    <property type="entry name" value="dsRNA-binding domain-like"/>
    <property type="match status" value="1"/>
</dbReference>
<dbReference type="SUPFAM" id="SSF69065">
    <property type="entry name" value="RNase III domain-like"/>
    <property type="match status" value="1"/>
</dbReference>
<dbReference type="PROSITE" id="PS50137">
    <property type="entry name" value="DS_RBD"/>
    <property type="match status" value="1"/>
</dbReference>
<dbReference type="PROSITE" id="PS00517">
    <property type="entry name" value="RNASE_3_1"/>
    <property type="match status" value="1"/>
</dbReference>
<dbReference type="PROSITE" id="PS50142">
    <property type="entry name" value="RNASE_3_2"/>
    <property type="match status" value="1"/>
</dbReference>
<organism>
    <name type="scientific">Vibrio vulnificus (strain YJ016)</name>
    <dbReference type="NCBI Taxonomy" id="196600"/>
    <lineage>
        <taxon>Bacteria</taxon>
        <taxon>Pseudomonadati</taxon>
        <taxon>Pseudomonadota</taxon>
        <taxon>Gammaproteobacteria</taxon>
        <taxon>Vibrionales</taxon>
        <taxon>Vibrionaceae</taxon>
        <taxon>Vibrio</taxon>
    </lineage>
</organism>
<proteinExistence type="inferred from homology"/>
<feature type="chain" id="PRO_0000180455" description="Ribonuclease 3">
    <location>
        <begin position="1"/>
        <end position="225"/>
    </location>
</feature>
<feature type="domain" description="RNase III" evidence="1">
    <location>
        <begin position="5"/>
        <end position="127"/>
    </location>
</feature>
<feature type="domain" description="DRBM" evidence="1">
    <location>
        <begin position="154"/>
        <end position="224"/>
    </location>
</feature>
<feature type="active site" evidence="1">
    <location>
        <position position="44"/>
    </location>
</feature>
<feature type="active site" evidence="1">
    <location>
        <position position="116"/>
    </location>
</feature>
<feature type="binding site" evidence="1">
    <location>
        <position position="40"/>
    </location>
    <ligand>
        <name>Mg(2+)</name>
        <dbReference type="ChEBI" id="CHEBI:18420"/>
    </ligand>
</feature>
<feature type="binding site" evidence="1">
    <location>
        <position position="113"/>
    </location>
    <ligand>
        <name>Mg(2+)</name>
        <dbReference type="ChEBI" id="CHEBI:18420"/>
    </ligand>
</feature>
<feature type="binding site" evidence="1">
    <location>
        <position position="116"/>
    </location>
    <ligand>
        <name>Mg(2+)</name>
        <dbReference type="ChEBI" id="CHEBI:18420"/>
    </ligand>
</feature>
<reference key="1">
    <citation type="journal article" date="2003" name="Genome Res.">
        <title>Comparative genome analysis of Vibrio vulnificus, a marine pathogen.</title>
        <authorList>
            <person name="Chen C.-Y."/>
            <person name="Wu K.-M."/>
            <person name="Chang Y.-C."/>
            <person name="Chang C.-H."/>
            <person name="Tsai H.-C."/>
            <person name="Liao T.-L."/>
            <person name="Liu Y.-M."/>
            <person name="Chen H.-J."/>
            <person name="Shen A.B.-T."/>
            <person name="Li J.-C."/>
            <person name="Su T.-L."/>
            <person name="Shao C.-P."/>
            <person name="Lee C.-T."/>
            <person name="Hor L.-I."/>
            <person name="Tsai S.-F."/>
        </authorList>
    </citation>
    <scope>NUCLEOTIDE SEQUENCE [LARGE SCALE GENOMIC DNA]</scope>
    <source>
        <strain>YJ016</strain>
    </source>
</reference>
<accession>Q7MHN8</accession>
<comment type="function">
    <text evidence="1">Digests double-stranded RNA. Involved in the processing of primary rRNA transcript to yield the immediate precursors to the large and small rRNAs (23S and 16S). Processes some mRNAs, and tRNAs when they are encoded in the rRNA operon. Processes pre-crRNA and tracrRNA of type II CRISPR loci if present in the organism.</text>
</comment>
<comment type="catalytic activity">
    <reaction evidence="1">
        <text>Endonucleolytic cleavage to 5'-phosphomonoester.</text>
        <dbReference type="EC" id="3.1.26.3"/>
    </reaction>
</comment>
<comment type="cofactor">
    <cofactor evidence="1">
        <name>Mg(2+)</name>
        <dbReference type="ChEBI" id="CHEBI:18420"/>
    </cofactor>
</comment>
<comment type="subunit">
    <text evidence="1">Homodimer.</text>
</comment>
<comment type="subcellular location">
    <subcellularLocation>
        <location evidence="1">Cytoplasm</location>
    </subcellularLocation>
</comment>
<comment type="similarity">
    <text evidence="1">Belongs to the ribonuclease III family.</text>
</comment>
<comment type="sequence caution" evidence="2">
    <conflict type="erroneous initiation">
        <sequence resource="EMBL-CDS" id="BAC95595"/>
    </conflict>
    <text>Extended N-terminus.</text>
</comment>
<sequence>MNSPIEKLTRQLGYQFQDDELLNLALTHRSANSKHNERLEFLGDSILSFVIADELYHRFPKVNEGDMSRMRATLVRGNTLAELGREFGLGDYLKLGPGELKSGGFRRDSILADAVEAIIGAVYLDSDLEVVRGIVLNWYASRLEAIKPGVSQKDPKTRLQEFLQGRRKPLPVYTVTNIKGEAHNQEFTVECDIAGMDKPVVGRGTSRRKAEQAAAELALEQLTNG</sequence>
<gene>
    <name evidence="1" type="primary">rnc</name>
    <name type="ordered locus">VV2831</name>
</gene>
<name>RNC_VIBVY</name>